<gene>
    <name evidence="1" type="primary">ligA2</name>
    <name type="ordered locus">CA_C2673</name>
</gene>
<feature type="chain" id="PRO_0000313193" description="DNA ligase 2">
    <location>
        <begin position="1"/>
        <end position="669"/>
    </location>
</feature>
<feature type="domain" description="BRCT" evidence="1">
    <location>
        <begin position="590"/>
        <end position="669"/>
    </location>
</feature>
<feature type="active site" description="N6-AMP-lysine intermediate" evidence="1">
    <location>
        <position position="125"/>
    </location>
</feature>
<feature type="binding site" evidence="1">
    <location>
        <begin position="35"/>
        <end position="39"/>
    </location>
    <ligand>
        <name>NAD(+)</name>
        <dbReference type="ChEBI" id="CHEBI:57540"/>
    </ligand>
</feature>
<feature type="binding site" evidence="1">
    <location>
        <begin position="83"/>
        <end position="84"/>
    </location>
    <ligand>
        <name>NAD(+)</name>
        <dbReference type="ChEBI" id="CHEBI:57540"/>
    </ligand>
</feature>
<feature type="binding site" evidence="1">
    <location>
        <position position="147"/>
    </location>
    <ligand>
        <name>NAD(+)</name>
        <dbReference type="ChEBI" id="CHEBI:57540"/>
    </ligand>
</feature>
<feature type="binding site" evidence="1">
    <location>
        <position position="181"/>
    </location>
    <ligand>
        <name>NAD(+)</name>
        <dbReference type="ChEBI" id="CHEBI:57540"/>
    </ligand>
</feature>
<feature type="binding site" evidence="1">
    <location>
        <position position="317"/>
    </location>
    <ligand>
        <name>NAD(+)</name>
        <dbReference type="ChEBI" id="CHEBI:57540"/>
    </ligand>
</feature>
<feature type="binding site" evidence="1">
    <location>
        <position position="410"/>
    </location>
    <ligand>
        <name>Zn(2+)</name>
        <dbReference type="ChEBI" id="CHEBI:29105"/>
    </ligand>
</feature>
<feature type="binding site" evidence="1">
    <location>
        <position position="413"/>
    </location>
    <ligand>
        <name>Zn(2+)</name>
        <dbReference type="ChEBI" id="CHEBI:29105"/>
    </ligand>
</feature>
<feature type="binding site" evidence="1">
    <location>
        <position position="426"/>
    </location>
    <ligand>
        <name>Zn(2+)</name>
        <dbReference type="ChEBI" id="CHEBI:29105"/>
    </ligand>
</feature>
<feature type="binding site" evidence="1">
    <location>
        <position position="432"/>
    </location>
    <ligand>
        <name>Zn(2+)</name>
        <dbReference type="ChEBI" id="CHEBI:29105"/>
    </ligand>
</feature>
<evidence type="ECO:0000255" key="1">
    <source>
        <dbReference type="HAMAP-Rule" id="MF_01588"/>
    </source>
</evidence>
<keyword id="KW-0227">DNA damage</keyword>
<keyword id="KW-0234">DNA repair</keyword>
<keyword id="KW-0235">DNA replication</keyword>
<keyword id="KW-0436">Ligase</keyword>
<keyword id="KW-0460">Magnesium</keyword>
<keyword id="KW-0464">Manganese</keyword>
<keyword id="KW-0479">Metal-binding</keyword>
<keyword id="KW-0520">NAD</keyword>
<keyword id="KW-1185">Reference proteome</keyword>
<keyword id="KW-0862">Zinc</keyword>
<accession>Q97FQ5</accession>
<protein>
    <recommendedName>
        <fullName evidence="1">DNA ligase 2</fullName>
        <ecNumber evidence="1">6.5.1.2</ecNumber>
    </recommendedName>
    <alternativeName>
        <fullName evidence="1">Polydeoxyribonucleotide synthase [NAD(+)] 2</fullName>
    </alternativeName>
</protein>
<reference key="1">
    <citation type="journal article" date="2001" name="J. Bacteriol.">
        <title>Genome sequence and comparative analysis of the solvent-producing bacterium Clostridium acetobutylicum.</title>
        <authorList>
            <person name="Noelling J."/>
            <person name="Breton G."/>
            <person name="Omelchenko M.V."/>
            <person name="Makarova K.S."/>
            <person name="Zeng Q."/>
            <person name="Gibson R."/>
            <person name="Lee H.M."/>
            <person name="Dubois J."/>
            <person name="Qiu D."/>
            <person name="Hitti J."/>
            <person name="Wolf Y.I."/>
            <person name="Tatusov R.L."/>
            <person name="Sabathe F."/>
            <person name="Doucette-Stamm L.A."/>
            <person name="Soucaille P."/>
            <person name="Daly M.J."/>
            <person name="Bennett G.N."/>
            <person name="Koonin E.V."/>
            <person name="Smith D.R."/>
        </authorList>
    </citation>
    <scope>NUCLEOTIDE SEQUENCE [LARGE SCALE GENOMIC DNA]</scope>
    <source>
        <strain>ATCC 824 / DSM 792 / JCM 1419 / IAM 19013 / LMG 5710 / NBRC 13948 / NRRL B-527 / VKM B-1787 / 2291 / W</strain>
    </source>
</reference>
<proteinExistence type="inferred from homology"/>
<name>DNLJ2_CLOAB</name>
<sequence>MNEKESNILRMQELIEELNKYSYSYYVLDNPIVADKEYDKRYDELVELEEKTGITYPYSPTNRVGDVILKQFQKYTHKSRLWSLDKAQSFEEIIDWHNRNKKAVAEYNSNHEDKLPELKYVLTKKFDGLTINCTYDESGVMIKAATRGTGVIGEDITSQAKTIKSIPLKIKNGSVVEVHGEAIMTKTAFNEYNKKAEVPLKNLRNGAAGALRNLNVRETARRNLSAFFYDVGYNEGKAFKSYMEMMNFIKEMGFPVDEYLKECNTIEEINKEIQYVGDIRSSLDYDIDGVVIVIDDYRTREYLGYTVKFPKWAIAYKFEAEEATTKLLDVEWNVGRSGRVSPTAILEPVELAGVIVKRATLNNMDDIGRKKVKIGSRVFVRRSNDVIPEIMGVTEETEGETNEIEAPTICPYCGSEIVKEGVHLFCENTLSCKPQMVKSIVHFASREAMNIEGFSEKTAEQLFEKLNIKSISDLYRITKEELMSLDKFKDKKASNLINAIEKSKKCDLASFVYSLGIPNVGKKTATDLCKQFKSFENIKKASYDELILVQDIGSIVAESIVEFFKQEKIEKSLNELFELGVTPFYEESEVVENAFTGKTVVATGTLQNYSRTAIKEKLESLGANVAGSVSKKTDYVIAGENAGSKYDKAVQLGVKILTEEEFEQLINNM</sequence>
<organism>
    <name type="scientific">Clostridium acetobutylicum (strain ATCC 824 / DSM 792 / JCM 1419 / IAM 19013 / LMG 5710 / NBRC 13948 / NRRL B-527 / VKM B-1787 / 2291 / W)</name>
    <dbReference type="NCBI Taxonomy" id="272562"/>
    <lineage>
        <taxon>Bacteria</taxon>
        <taxon>Bacillati</taxon>
        <taxon>Bacillota</taxon>
        <taxon>Clostridia</taxon>
        <taxon>Eubacteriales</taxon>
        <taxon>Clostridiaceae</taxon>
        <taxon>Clostridium</taxon>
    </lineage>
</organism>
<comment type="function">
    <text evidence="1">DNA ligase that catalyzes the formation of phosphodiester linkages between 5'-phosphoryl and 3'-hydroxyl groups in double-stranded DNA using NAD as a coenzyme and as the energy source for the reaction. It is essential for DNA replication and repair of damaged DNA.</text>
</comment>
<comment type="catalytic activity">
    <reaction evidence="1">
        <text>NAD(+) + (deoxyribonucleotide)n-3'-hydroxyl + 5'-phospho-(deoxyribonucleotide)m = (deoxyribonucleotide)n+m + AMP + beta-nicotinamide D-nucleotide.</text>
        <dbReference type="EC" id="6.5.1.2"/>
    </reaction>
</comment>
<comment type="cofactor">
    <cofactor evidence="1">
        <name>Mg(2+)</name>
        <dbReference type="ChEBI" id="CHEBI:18420"/>
    </cofactor>
    <cofactor evidence="1">
        <name>Mn(2+)</name>
        <dbReference type="ChEBI" id="CHEBI:29035"/>
    </cofactor>
</comment>
<comment type="similarity">
    <text evidence="1">Belongs to the NAD-dependent DNA ligase family. LigA subfamily.</text>
</comment>
<dbReference type="EC" id="6.5.1.2" evidence="1"/>
<dbReference type="EMBL" id="AE001437">
    <property type="protein sequence ID" value="AAK80620.1"/>
    <property type="molecule type" value="Genomic_DNA"/>
</dbReference>
<dbReference type="PIR" id="A97229">
    <property type="entry name" value="A97229"/>
</dbReference>
<dbReference type="RefSeq" id="NP_349280.1">
    <property type="nucleotide sequence ID" value="NC_003030.1"/>
</dbReference>
<dbReference type="RefSeq" id="WP_010965961.1">
    <property type="nucleotide sequence ID" value="NC_003030.1"/>
</dbReference>
<dbReference type="SMR" id="Q97FQ5"/>
<dbReference type="STRING" id="272562.CA_C2673"/>
<dbReference type="KEGG" id="cac:CA_C2673"/>
<dbReference type="PATRIC" id="fig|272562.8.peg.2863"/>
<dbReference type="eggNOG" id="COG0272">
    <property type="taxonomic scope" value="Bacteria"/>
</dbReference>
<dbReference type="HOGENOM" id="CLU_007764_2_1_9"/>
<dbReference type="OrthoDB" id="9759736at2"/>
<dbReference type="Proteomes" id="UP000000814">
    <property type="component" value="Chromosome"/>
</dbReference>
<dbReference type="GO" id="GO:0005829">
    <property type="term" value="C:cytosol"/>
    <property type="evidence" value="ECO:0007669"/>
    <property type="project" value="TreeGrafter"/>
</dbReference>
<dbReference type="GO" id="GO:0003677">
    <property type="term" value="F:DNA binding"/>
    <property type="evidence" value="ECO:0007669"/>
    <property type="project" value="InterPro"/>
</dbReference>
<dbReference type="GO" id="GO:0003911">
    <property type="term" value="F:DNA ligase (NAD+) activity"/>
    <property type="evidence" value="ECO:0007669"/>
    <property type="project" value="UniProtKB-UniRule"/>
</dbReference>
<dbReference type="GO" id="GO:0046872">
    <property type="term" value="F:metal ion binding"/>
    <property type="evidence" value="ECO:0007669"/>
    <property type="project" value="UniProtKB-KW"/>
</dbReference>
<dbReference type="GO" id="GO:0006281">
    <property type="term" value="P:DNA repair"/>
    <property type="evidence" value="ECO:0007669"/>
    <property type="project" value="UniProtKB-KW"/>
</dbReference>
<dbReference type="GO" id="GO:0006260">
    <property type="term" value="P:DNA replication"/>
    <property type="evidence" value="ECO:0007669"/>
    <property type="project" value="UniProtKB-KW"/>
</dbReference>
<dbReference type="CDD" id="cd17748">
    <property type="entry name" value="BRCT_DNA_ligase_like"/>
    <property type="match status" value="1"/>
</dbReference>
<dbReference type="CDD" id="cd00114">
    <property type="entry name" value="LIGANc"/>
    <property type="match status" value="1"/>
</dbReference>
<dbReference type="FunFam" id="1.10.150.20:FF:000007">
    <property type="entry name" value="DNA ligase"/>
    <property type="match status" value="1"/>
</dbReference>
<dbReference type="FunFam" id="2.40.50.140:FF:000012">
    <property type="entry name" value="DNA ligase"/>
    <property type="match status" value="1"/>
</dbReference>
<dbReference type="FunFam" id="3.40.50.10190:FF:000054">
    <property type="entry name" value="DNA ligase"/>
    <property type="match status" value="1"/>
</dbReference>
<dbReference type="Gene3D" id="1.10.150.20">
    <property type="entry name" value="5' to 3' exonuclease, C-terminal subdomain"/>
    <property type="match status" value="2"/>
</dbReference>
<dbReference type="Gene3D" id="3.40.50.10190">
    <property type="entry name" value="BRCT domain"/>
    <property type="match status" value="1"/>
</dbReference>
<dbReference type="Gene3D" id="3.30.470.30">
    <property type="entry name" value="DNA ligase/mRNA capping enzyme"/>
    <property type="match status" value="1"/>
</dbReference>
<dbReference type="Gene3D" id="1.10.287.610">
    <property type="entry name" value="Helix hairpin bin"/>
    <property type="match status" value="1"/>
</dbReference>
<dbReference type="Gene3D" id="2.40.50.140">
    <property type="entry name" value="Nucleic acid-binding proteins"/>
    <property type="match status" value="1"/>
</dbReference>
<dbReference type="HAMAP" id="MF_01588">
    <property type="entry name" value="DNA_ligase_A"/>
    <property type="match status" value="1"/>
</dbReference>
<dbReference type="InterPro" id="IPR001357">
    <property type="entry name" value="BRCT_dom"/>
</dbReference>
<dbReference type="InterPro" id="IPR036420">
    <property type="entry name" value="BRCT_dom_sf"/>
</dbReference>
<dbReference type="InterPro" id="IPR041663">
    <property type="entry name" value="DisA/LigA_HHH"/>
</dbReference>
<dbReference type="InterPro" id="IPR001679">
    <property type="entry name" value="DNA_ligase"/>
</dbReference>
<dbReference type="InterPro" id="IPR033136">
    <property type="entry name" value="DNA_ligase_CS"/>
</dbReference>
<dbReference type="InterPro" id="IPR013839">
    <property type="entry name" value="DNAligase_adenylation"/>
</dbReference>
<dbReference type="InterPro" id="IPR013840">
    <property type="entry name" value="DNAligase_N"/>
</dbReference>
<dbReference type="InterPro" id="IPR003583">
    <property type="entry name" value="Hlx-hairpin-Hlx_DNA-bd_motif"/>
</dbReference>
<dbReference type="InterPro" id="IPR012340">
    <property type="entry name" value="NA-bd_OB-fold"/>
</dbReference>
<dbReference type="InterPro" id="IPR004150">
    <property type="entry name" value="NAD_DNA_ligase_OB"/>
</dbReference>
<dbReference type="InterPro" id="IPR010994">
    <property type="entry name" value="RuvA_2-like"/>
</dbReference>
<dbReference type="NCBIfam" id="TIGR00575">
    <property type="entry name" value="dnlj"/>
    <property type="match status" value="1"/>
</dbReference>
<dbReference type="NCBIfam" id="NF005932">
    <property type="entry name" value="PRK07956.1"/>
    <property type="match status" value="1"/>
</dbReference>
<dbReference type="PANTHER" id="PTHR23389">
    <property type="entry name" value="CHROMOSOME TRANSMISSION FIDELITY FACTOR 18"/>
    <property type="match status" value="1"/>
</dbReference>
<dbReference type="PANTHER" id="PTHR23389:SF9">
    <property type="entry name" value="DNA LIGASE"/>
    <property type="match status" value="1"/>
</dbReference>
<dbReference type="Pfam" id="PF00533">
    <property type="entry name" value="BRCT"/>
    <property type="match status" value="1"/>
</dbReference>
<dbReference type="Pfam" id="PF01653">
    <property type="entry name" value="DNA_ligase_aden"/>
    <property type="match status" value="1"/>
</dbReference>
<dbReference type="Pfam" id="PF03120">
    <property type="entry name" value="DNA_ligase_OB"/>
    <property type="match status" value="1"/>
</dbReference>
<dbReference type="Pfam" id="PF12826">
    <property type="entry name" value="HHH_2"/>
    <property type="match status" value="1"/>
</dbReference>
<dbReference type="Pfam" id="PF14520">
    <property type="entry name" value="HHH_5"/>
    <property type="match status" value="1"/>
</dbReference>
<dbReference type="PIRSF" id="PIRSF001604">
    <property type="entry name" value="LigA"/>
    <property type="match status" value="1"/>
</dbReference>
<dbReference type="SMART" id="SM00292">
    <property type="entry name" value="BRCT"/>
    <property type="match status" value="1"/>
</dbReference>
<dbReference type="SMART" id="SM00278">
    <property type="entry name" value="HhH1"/>
    <property type="match status" value="3"/>
</dbReference>
<dbReference type="SMART" id="SM00532">
    <property type="entry name" value="LIGANc"/>
    <property type="match status" value="1"/>
</dbReference>
<dbReference type="SUPFAM" id="SSF52113">
    <property type="entry name" value="BRCT domain"/>
    <property type="match status" value="1"/>
</dbReference>
<dbReference type="SUPFAM" id="SSF56091">
    <property type="entry name" value="DNA ligase/mRNA capping enzyme, catalytic domain"/>
    <property type="match status" value="1"/>
</dbReference>
<dbReference type="SUPFAM" id="SSF50249">
    <property type="entry name" value="Nucleic acid-binding proteins"/>
    <property type="match status" value="1"/>
</dbReference>
<dbReference type="SUPFAM" id="SSF47781">
    <property type="entry name" value="RuvA domain 2-like"/>
    <property type="match status" value="1"/>
</dbReference>
<dbReference type="PROSITE" id="PS50172">
    <property type="entry name" value="BRCT"/>
    <property type="match status" value="1"/>
</dbReference>
<dbReference type="PROSITE" id="PS01056">
    <property type="entry name" value="DNA_LIGASE_N2"/>
    <property type="match status" value="1"/>
</dbReference>